<evidence type="ECO:0000250" key="1">
    <source>
        <dbReference type="UniProtKB" id="P00410"/>
    </source>
</evidence>
<evidence type="ECO:0000255" key="2"/>
<evidence type="ECO:0000269" key="3">
    <source>
    </source>
</evidence>
<evidence type="ECO:0000269" key="4">
    <source>
    </source>
</evidence>
<evidence type="ECO:0000305" key="5"/>
<accession>P00412</accession>
<organism>
    <name type="scientific">Zea mays</name>
    <name type="common">Maize</name>
    <dbReference type="NCBI Taxonomy" id="4577"/>
    <lineage>
        <taxon>Eukaryota</taxon>
        <taxon>Viridiplantae</taxon>
        <taxon>Streptophyta</taxon>
        <taxon>Embryophyta</taxon>
        <taxon>Tracheophyta</taxon>
        <taxon>Spermatophyta</taxon>
        <taxon>Magnoliopsida</taxon>
        <taxon>Liliopsida</taxon>
        <taxon>Poales</taxon>
        <taxon>Poaceae</taxon>
        <taxon>PACMAD clade</taxon>
        <taxon>Panicoideae</taxon>
        <taxon>Andropogonodae</taxon>
        <taxon>Andropogoneae</taxon>
        <taxon>Tripsacinae</taxon>
        <taxon>Zea</taxon>
    </lineage>
</organism>
<dbReference type="EC" id="7.1.1.9"/>
<dbReference type="EMBL" id="V00712">
    <property type="protein sequence ID" value="CAA24094.1"/>
    <property type="status" value="ALT_SEQ"/>
    <property type="molecule type" value="Genomic_DNA"/>
</dbReference>
<dbReference type="EMBL" id="X52865">
    <property type="protein sequence ID" value="CAA37046.1"/>
    <property type="status" value="ALT_SEQ"/>
    <property type="molecule type" value="mRNA"/>
</dbReference>
<dbReference type="PIR" id="B41260">
    <property type="entry name" value="OBZM2"/>
</dbReference>
<dbReference type="SMR" id="P00412"/>
<dbReference type="PaxDb" id="4577-GRMZM2G109332_P01"/>
<dbReference type="MaizeGDB" id="69218"/>
<dbReference type="eggNOG" id="KOG4767">
    <property type="taxonomic scope" value="Eukaryota"/>
</dbReference>
<dbReference type="OrthoDB" id="609715at2759"/>
<dbReference type="GO" id="GO:0005743">
    <property type="term" value="C:mitochondrial inner membrane"/>
    <property type="evidence" value="ECO:0007669"/>
    <property type="project" value="UniProtKB-SubCell"/>
</dbReference>
<dbReference type="GO" id="GO:0005507">
    <property type="term" value="F:copper ion binding"/>
    <property type="evidence" value="ECO:0007669"/>
    <property type="project" value="InterPro"/>
</dbReference>
<dbReference type="GO" id="GO:0004129">
    <property type="term" value="F:cytochrome-c oxidase activity"/>
    <property type="evidence" value="ECO:0007669"/>
    <property type="project" value="UniProtKB-EC"/>
</dbReference>
<dbReference type="GO" id="GO:0042773">
    <property type="term" value="P:ATP synthesis coupled electron transport"/>
    <property type="evidence" value="ECO:0000318"/>
    <property type="project" value="GO_Central"/>
</dbReference>
<dbReference type="CDD" id="cd13912">
    <property type="entry name" value="CcO_II_C"/>
    <property type="match status" value="1"/>
</dbReference>
<dbReference type="FunFam" id="1.10.287.90:FF:000004">
    <property type="entry name" value="Cytochrome c oxidase subunit 2"/>
    <property type="match status" value="1"/>
</dbReference>
<dbReference type="FunFam" id="2.60.40.420:FF:000001">
    <property type="entry name" value="Cytochrome c oxidase subunit 2"/>
    <property type="match status" value="1"/>
</dbReference>
<dbReference type="Gene3D" id="1.10.287.90">
    <property type="match status" value="1"/>
</dbReference>
<dbReference type="Gene3D" id="2.60.40.420">
    <property type="entry name" value="Cupredoxins - blue copper proteins"/>
    <property type="match status" value="1"/>
</dbReference>
<dbReference type="InterPro" id="IPR045187">
    <property type="entry name" value="CcO_II"/>
</dbReference>
<dbReference type="InterPro" id="IPR002429">
    <property type="entry name" value="CcO_II-like_C"/>
</dbReference>
<dbReference type="InterPro" id="IPR034210">
    <property type="entry name" value="CcO_II_C"/>
</dbReference>
<dbReference type="InterPro" id="IPR001505">
    <property type="entry name" value="Copper_CuA"/>
</dbReference>
<dbReference type="InterPro" id="IPR008972">
    <property type="entry name" value="Cupredoxin"/>
</dbReference>
<dbReference type="InterPro" id="IPR014222">
    <property type="entry name" value="Cyt_c_oxidase_su2"/>
</dbReference>
<dbReference type="InterPro" id="IPR011759">
    <property type="entry name" value="Cyt_c_oxidase_su2_TM_dom"/>
</dbReference>
<dbReference type="InterPro" id="IPR036257">
    <property type="entry name" value="Cyt_c_oxidase_su2_TM_sf"/>
</dbReference>
<dbReference type="NCBIfam" id="TIGR02866">
    <property type="entry name" value="CoxB"/>
    <property type="match status" value="1"/>
</dbReference>
<dbReference type="PANTHER" id="PTHR22888:SF9">
    <property type="entry name" value="CYTOCHROME C OXIDASE SUBUNIT 2"/>
    <property type="match status" value="1"/>
</dbReference>
<dbReference type="PANTHER" id="PTHR22888">
    <property type="entry name" value="CYTOCHROME C OXIDASE, SUBUNIT II"/>
    <property type="match status" value="1"/>
</dbReference>
<dbReference type="Pfam" id="PF00116">
    <property type="entry name" value="COX2"/>
    <property type="match status" value="1"/>
</dbReference>
<dbReference type="Pfam" id="PF02790">
    <property type="entry name" value="COX2_TM"/>
    <property type="match status" value="1"/>
</dbReference>
<dbReference type="PRINTS" id="PR01166">
    <property type="entry name" value="CYCOXIDASEII"/>
</dbReference>
<dbReference type="SUPFAM" id="SSF49503">
    <property type="entry name" value="Cupredoxins"/>
    <property type="match status" value="1"/>
</dbReference>
<dbReference type="SUPFAM" id="SSF81464">
    <property type="entry name" value="Cytochrome c oxidase subunit II-like, transmembrane region"/>
    <property type="match status" value="1"/>
</dbReference>
<dbReference type="PROSITE" id="PS00078">
    <property type="entry name" value="COX2"/>
    <property type="match status" value="1"/>
</dbReference>
<dbReference type="PROSITE" id="PS50857">
    <property type="entry name" value="COX2_CUA"/>
    <property type="match status" value="1"/>
</dbReference>
<dbReference type="PROSITE" id="PS50999">
    <property type="entry name" value="COX2_TM"/>
    <property type="match status" value="1"/>
</dbReference>
<proteinExistence type="evidence at transcript level"/>
<sequence>MILRLLECRFFTIALCDAAEPWQLGFQDAATPMMQGIIDLHHDIFFFLILILVFVLWMLVRALWHFNEQTNPIPQRIVHGTTIEIIWTIFPSVILLFIAIPSFALLYSMDGVLVDPAITIKAIGHQWYWTYEYSDYNSSDEQSLTFDSYMIPEDDLELGQLRLLEVDNRVVVPAKTHLRMIVTSADVLHSWAVPSLGVKCDAVPGRLNLTSILVQREGVYYGQCSEICGTNHAFMPIVVEAVTLKDYADWVSNQLILQTN</sequence>
<comment type="function">
    <text evidence="1">Component of the cytochrome c oxidase, the last enzyme in the mitochondrial electron transport chain which drives oxidative phosphorylation. The respiratory chain contains 3 multisubunit complexes succinate dehydrogenase (complex II, CII), ubiquinol-cytochrome c oxidoreductase (cytochrome b-c1 complex, complex III, CIII) and cytochrome c oxidase (complex IV, CIV), that cooperate to transfer electrons derived from NADH and succinate to molecular oxygen, creating an electrochemical gradient over the inner membrane that drives transmembrane transport and the ATP synthase. Cytochrome c oxidase is the component of the respiratory chain that catalyzes the reduction of oxygen to water. Electrons originating from reduced cytochrome c in the intermembrane space (IMS) are transferred via the dinuclear copper A center (CU(A)) of subunit 2 and heme A of subunit 1 to the active site in subunit 1, a binuclear center (BNC) formed by heme A3 and copper B (CU(B)). The BNC reduces molecular oxygen to 2 water molecules using 4 electrons from cytochrome c in the IMS and 4 protons from the mitochondrial matrix.</text>
</comment>
<comment type="catalytic activity">
    <reaction evidence="1">
        <text>4 Fe(II)-[cytochrome c] + O2 + 8 H(+)(in) = 4 Fe(III)-[cytochrome c] + 2 H2O + 4 H(+)(out)</text>
        <dbReference type="Rhea" id="RHEA:11436"/>
        <dbReference type="Rhea" id="RHEA-COMP:10350"/>
        <dbReference type="Rhea" id="RHEA-COMP:14399"/>
        <dbReference type="ChEBI" id="CHEBI:15377"/>
        <dbReference type="ChEBI" id="CHEBI:15378"/>
        <dbReference type="ChEBI" id="CHEBI:15379"/>
        <dbReference type="ChEBI" id="CHEBI:29033"/>
        <dbReference type="ChEBI" id="CHEBI:29034"/>
        <dbReference type="EC" id="7.1.1.9"/>
    </reaction>
    <physiologicalReaction direction="left-to-right" evidence="1">
        <dbReference type="Rhea" id="RHEA:11437"/>
    </physiologicalReaction>
</comment>
<comment type="cofactor">
    <cofactor evidence="1">
        <name>Cu cation</name>
        <dbReference type="ChEBI" id="CHEBI:23378"/>
    </cofactor>
    <text evidence="1">Binds a dinuclear copper A center per subunit.</text>
</comment>
<comment type="subunit">
    <text evidence="1">Component of the cytochrome c oxidase (complex IV, CIV), a multisubunit enzyme composed of a catalytic core of 3 subunits and several supernumerary subunits. The complex exists as a monomer or a dimer and forms supercomplexes (SCs) in the inner mitochondrial membrane with ubiquinol-cytochrome c oxidoreductase (cytochrome b-c1 complex, complex III, CIII).</text>
</comment>
<comment type="subcellular location">
    <subcellularLocation>
        <location evidence="1">Mitochondrion inner membrane</location>
        <topology evidence="1">Multi-pass membrane protein</topology>
    </subcellularLocation>
</comment>
<comment type="RNA editing">
    <location>
        <position position="5" evidence="3 4"/>
    </location>
    <location>
        <position position="11" evidence="3 4"/>
    </location>
    <location>
        <position position="26" evidence="3 4"/>
    </location>
    <location>
        <position position="56" evidence="3 4"/>
    </location>
    <location>
        <position position="57" evidence="3 4"/>
    </location>
    <location>
        <position position="87" evidence="3 4"/>
    </location>
    <location>
        <position position="95" evidence="3 4"/>
    </location>
    <location>
        <position position="129" evidence="3 4"/>
    </location>
    <location>
        <position position="130" evidence="3 4"/>
    </location>
    <location>
        <position position="150" evidence="3 4"/>
    </location>
    <location>
        <position position="156" evidence="3 4"/>
    </location>
    <location>
        <position position="161" evidence="3 4"/>
    </location>
    <location>
        <position position="184" evidence="3 4"/>
    </location>
    <location>
        <position position="188" evidence="3 4"/>
    </location>
    <location>
        <position position="196" evidence="3 4"/>
    </location>
    <location>
        <position position="207" evidence="3 4"/>
    </location>
    <location>
        <position position="213" evidence="3 4"/>
    </location>
    <location>
        <position position="235" evidence="3 4"/>
    </location>
</comment>
<comment type="similarity">
    <text evidence="5">Belongs to the cytochrome c oxidase subunit 2 family.</text>
</comment>
<name>COX2_MAIZE</name>
<protein>
    <recommendedName>
        <fullName>Cytochrome c oxidase subunit 2</fullName>
        <ecNumber>7.1.1.9</ecNumber>
    </recommendedName>
    <alternativeName>
        <fullName>Cytochrome c oxidase polypeptide II</fullName>
    </alternativeName>
</protein>
<gene>
    <name type="primary">COX2</name>
    <name type="synonym">COXII</name>
    <name type="synonym">MOX1</name>
</gene>
<feature type="chain" id="PRO_0000183629" description="Cytochrome c oxidase subunit 2">
    <location>
        <begin position="1"/>
        <end position="260"/>
    </location>
</feature>
<feature type="topological domain" description="Mitochondrial intermembrane" evidence="2">
    <location>
        <begin position="1"/>
        <end position="43"/>
    </location>
</feature>
<feature type="transmembrane region" description="Helical" evidence="2">
    <location>
        <begin position="44"/>
        <end position="64"/>
    </location>
</feature>
<feature type="topological domain" description="Mitochondrial matrix" evidence="2">
    <location>
        <begin position="65"/>
        <end position="84"/>
    </location>
</feature>
<feature type="transmembrane region" description="Helical" evidence="2">
    <location>
        <begin position="85"/>
        <end position="105"/>
    </location>
</feature>
<feature type="topological domain" description="Mitochondrial intermembrane" evidence="2">
    <location>
        <begin position="106"/>
        <end position="260"/>
    </location>
</feature>
<feature type="binding site" evidence="1">
    <location>
        <position position="189"/>
    </location>
    <ligand>
        <name>Cu cation</name>
        <dbReference type="ChEBI" id="CHEBI:23378"/>
        <label>A1</label>
    </ligand>
</feature>
<feature type="binding site" evidence="1">
    <location>
        <position position="224"/>
    </location>
    <ligand>
        <name>Cu cation</name>
        <dbReference type="ChEBI" id="CHEBI:23378"/>
        <label>A1</label>
    </ligand>
</feature>
<feature type="binding site" evidence="1">
    <location>
        <position position="224"/>
    </location>
    <ligand>
        <name>Cu cation</name>
        <dbReference type="ChEBI" id="CHEBI:23378"/>
        <label>A2</label>
    </ligand>
</feature>
<feature type="binding site" evidence="1">
    <location>
        <position position="226"/>
    </location>
    <ligand>
        <name>Cu cation</name>
        <dbReference type="ChEBI" id="CHEBI:23378"/>
        <label>A2</label>
    </ligand>
</feature>
<feature type="binding site" evidence="1">
    <location>
        <position position="226"/>
    </location>
    <ligand>
        <name>Mg(2+)</name>
        <dbReference type="ChEBI" id="CHEBI:18420"/>
        <note>ligand shared with subunit 1</note>
    </ligand>
</feature>
<feature type="binding site" evidence="1">
    <location>
        <position position="228"/>
    </location>
    <ligand>
        <name>Cu cation</name>
        <dbReference type="ChEBI" id="CHEBI:23378"/>
        <label>A1</label>
    </ligand>
</feature>
<feature type="binding site" evidence="1">
    <location>
        <position position="228"/>
    </location>
    <ligand>
        <name>Cu cation</name>
        <dbReference type="ChEBI" id="CHEBI:23378"/>
        <label>A2</label>
    </ligand>
</feature>
<feature type="binding site" evidence="1">
    <location>
        <position position="232"/>
    </location>
    <ligand>
        <name>Cu cation</name>
        <dbReference type="ChEBI" id="CHEBI:23378"/>
        <label>A2</label>
    </ligand>
</feature>
<feature type="binding site" evidence="1">
    <location>
        <position position="235"/>
    </location>
    <ligand>
        <name>Cu cation</name>
        <dbReference type="ChEBI" id="CHEBI:23378"/>
        <label>A1</label>
    </ligand>
</feature>
<geneLocation type="mitochondrion"/>
<reference key="1">
    <citation type="journal article" date="1981" name="Cell">
        <title>The Zea mays mitochondrial gene coding cytochrome oxidase subunit II has an intervening sequence and does not contain TGA codons.</title>
        <authorList>
            <person name="Fox T.D."/>
            <person name="Leaver C.J."/>
        </authorList>
    </citation>
    <scope>NUCLEOTIDE SEQUENCE</scope>
</reference>
<reference key="2">
    <citation type="journal article" date="1991" name="Mol. Cell. Biol.">
        <title>RNA editing intermediates of cox2 transcripts in maize mitochondria.</title>
        <authorList>
            <person name="Yang A.J."/>
            <person name="Mulligan R.M."/>
        </authorList>
    </citation>
    <scope>NUCLEOTIDE SEQUENCE</scope>
    <scope>RNA EDITING</scope>
</reference>
<reference key="3">
    <citation type="journal article" date="1990" name="Nucleic Acids Res.">
        <title>Differences in editing at homologous sites in messenger RNAs from angiosperm mitochondria.</title>
        <authorList>
            <person name="Covello P.S."/>
            <person name="Gray M.W."/>
        </authorList>
    </citation>
    <scope>NUCLEOTIDE SEQUENCE [MRNA] OF 1-248</scope>
    <scope>RNA EDITING</scope>
    <source>
        <strain>cv. Golden Bantam early</strain>
        <tissue>Leaf</tissue>
    </source>
</reference>
<keyword id="KW-0186">Copper</keyword>
<keyword id="KW-0249">Electron transport</keyword>
<keyword id="KW-0460">Magnesium</keyword>
<keyword id="KW-0472">Membrane</keyword>
<keyword id="KW-0479">Metal-binding</keyword>
<keyword id="KW-0496">Mitochondrion</keyword>
<keyword id="KW-0999">Mitochondrion inner membrane</keyword>
<keyword id="KW-0679">Respiratory chain</keyword>
<keyword id="KW-0691">RNA editing</keyword>
<keyword id="KW-1278">Translocase</keyword>
<keyword id="KW-0812">Transmembrane</keyword>
<keyword id="KW-1133">Transmembrane helix</keyword>
<keyword id="KW-0813">Transport</keyword>